<protein>
    <recommendedName>
        <fullName evidence="1">Elongation factor 4</fullName>
        <shortName evidence="1">EF-4</shortName>
        <ecNumber evidence="1">3.6.5.n1</ecNumber>
    </recommendedName>
    <alternativeName>
        <fullName evidence="1">Ribosomal back-translocase LepA</fullName>
    </alternativeName>
</protein>
<feature type="chain" id="PRO_1000092395" description="Elongation factor 4">
    <location>
        <begin position="1"/>
        <end position="599"/>
    </location>
</feature>
<feature type="domain" description="tr-type G">
    <location>
        <begin position="2"/>
        <end position="184"/>
    </location>
</feature>
<feature type="binding site" evidence="1">
    <location>
        <begin position="14"/>
        <end position="19"/>
    </location>
    <ligand>
        <name>GTP</name>
        <dbReference type="ChEBI" id="CHEBI:37565"/>
    </ligand>
</feature>
<feature type="binding site" evidence="1">
    <location>
        <begin position="131"/>
        <end position="134"/>
    </location>
    <ligand>
        <name>GTP</name>
        <dbReference type="ChEBI" id="CHEBI:37565"/>
    </ligand>
</feature>
<proteinExistence type="inferred from homology"/>
<sequence length="599" mass="66570">MKNIRNFSIIAHIDHGKSTLSDRIIQICGGLSDREMEAQVLDSMDLERERGITIKAQSVTLDYKASDGETYQLNFIDTPGHVDFSYEVSRSLAACEGALLVVDAGQGVEAQTLANCYTAMEMDLEVVPVLNKIDLPAADPERVAEEIEDIVGIDATDAVRCSAKTGVGVQDVLERLVRDIPPPEGDPEGPLQALIIDSWFDNYLGVVSLIRIKNGTLRKGDKVKVMSTGQTYNADRLGIFTPKQVDRTELKCGEVGWLVCAIKDIHGAPVGDTLTLARNPAEKALPGFKKVKPQVYAGLFPVSSDDYEAFRDALGKLSLNDASLFYEPESSSALGFGFRCGFLGLLHMEIIQERLEREYDLDLITTAPTVVYEVETTSREVIYVDSPSKLPAVNNIYELREPIAECHMLLPQAYLGNVITLCVEKRGVQTNMVYHGNQVALTYEIPMAEVVLDFFDRLKSTSRGYASLDYNFKRFQASDMVRVDVLINGERVDALALITHRDNSQNRGRELVEKMKDLIPRQQFDIAIQAAIGTHIIARSTVKQLRKNVLAKCYGGDISRKKKLLQKQKEGKKRMKQIGNVELPQEAFLAILHVGKDNK</sequence>
<accession>B5Z143</accession>
<gene>
    <name evidence="1" type="primary">lepA</name>
    <name type="ordered locus">ECH74115_3806</name>
</gene>
<evidence type="ECO:0000255" key="1">
    <source>
        <dbReference type="HAMAP-Rule" id="MF_00071"/>
    </source>
</evidence>
<dbReference type="EC" id="3.6.5.n1" evidence="1"/>
<dbReference type="EMBL" id="CP001164">
    <property type="protein sequence ID" value="ACI37488.1"/>
    <property type="molecule type" value="Genomic_DNA"/>
</dbReference>
<dbReference type="RefSeq" id="WP_000790168.1">
    <property type="nucleotide sequence ID" value="NC_011353.1"/>
</dbReference>
<dbReference type="SMR" id="B5Z143"/>
<dbReference type="GeneID" id="93774522"/>
<dbReference type="KEGG" id="ecf:ECH74115_3806"/>
<dbReference type="HOGENOM" id="CLU_009995_3_3_6"/>
<dbReference type="GO" id="GO:0005886">
    <property type="term" value="C:plasma membrane"/>
    <property type="evidence" value="ECO:0007669"/>
    <property type="project" value="UniProtKB-SubCell"/>
</dbReference>
<dbReference type="GO" id="GO:0005525">
    <property type="term" value="F:GTP binding"/>
    <property type="evidence" value="ECO:0007669"/>
    <property type="project" value="UniProtKB-UniRule"/>
</dbReference>
<dbReference type="GO" id="GO:0003924">
    <property type="term" value="F:GTPase activity"/>
    <property type="evidence" value="ECO:0007669"/>
    <property type="project" value="UniProtKB-UniRule"/>
</dbReference>
<dbReference type="GO" id="GO:0097216">
    <property type="term" value="F:guanosine tetraphosphate binding"/>
    <property type="evidence" value="ECO:0007669"/>
    <property type="project" value="UniProtKB-ARBA"/>
</dbReference>
<dbReference type="GO" id="GO:0043022">
    <property type="term" value="F:ribosome binding"/>
    <property type="evidence" value="ECO:0007669"/>
    <property type="project" value="UniProtKB-UniRule"/>
</dbReference>
<dbReference type="GO" id="GO:0003746">
    <property type="term" value="F:translation elongation factor activity"/>
    <property type="evidence" value="ECO:0007669"/>
    <property type="project" value="UniProtKB-UniRule"/>
</dbReference>
<dbReference type="GO" id="GO:0045727">
    <property type="term" value="P:positive regulation of translation"/>
    <property type="evidence" value="ECO:0007669"/>
    <property type="project" value="UniProtKB-UniRule"/>
</dbReference>
<dbReference type="CDD" id="cd03699">
    <property type="entry name" value="EF4_II"/>
    <property type="match status" value="1"/>
</dbReference>
<dbReference type="CDD" id="cd16260">
    <property type="entry name" value="EF4_III"/>
    <property type="match status" value="1"/>
</dbReference>
<dbReference type="CDD" id="cd01890">
    <property type="entry name" value="LepA"/>
    <property type="match status" value="1"/>
</dbReference>
<dbReference type="CDD" id="cd03709">
    <property type="entry name" value="lepA_C"/>
    <property type="match status" value="1"/>
</dbReference>
<dbReference type="FunFam" id="3.30.70.240:FF:000005">
    <property type="entry name" value="Elongation factor 4"/>
    <property type="match status" value="1"/>
</dbReference>
<dbReference type="FunFam" id="3.40.50.300:FF:000078">
    <property type="entry name" value="Elongation factor 4"/>
    <property type="match status" value="1"/>
</dbReference>
<dbReference type="FunFam" id="2.40.30.10:FF:000015">
    <property type="entry name" value="Translation factor GUF1, mitochondrial"/>
    <property type="match status" value="1"/>
</dbReference>
<dbReference type="FunFam" id="3.30.70.2570:FF:000001">
    <property type="entry name" value="Translation factor GUF1, mitochondrial"/>
    <property type="match status" value="1"/>
</dbReference>
<dbReference type="FunFam" id="3.30.70.870:FF:000004">
    <property type="entry name" value="Translation factor GUF1, mitochondrial"/>
    <property type="match status" value="1"/>
</dbReference>
<dbReference type="Gene3D" id="3.30.70.240">
    <property type="match status" value="1"/>
</dbReference>
<dbReference type="Gene3D" id="3.30.70.2570">
    <property type="entry name" value="Elongation factor 4, C-terminal domain"/>
    <property type="match status" value="1"/>
</dbReference>
<dbReference type="Gene3D" id="3.30.70.870">
    <property type="entry name" value="Elongation Factor G (Translational Gtpase), domain 3"/>
    <property type="match status" value="1"/>
</dbReference>
<dbReference type="Gene3D" id="3.40.50.300">
    <property type="entry name" value="P-loop containing nucleotide triphosphate hydrolases"/>
    <property type="match status" value="1"/>
</dbReference>
<dbReference type="Gene3D" id="2.40.30.10">
    <property type="entry name" value="Translation factors"/>
    <property type="match status" value="1"/>
</dbReference>
<dbReference type="HAMAP" id="MF_00071">
    <property type="entry name" value="LepA"/>
    <property type="match status" value="1"/>
</dbReference>
<dbReference type="InterPro" id="IPR006297">
    <property type="entry name" value="EF-4"/>
</dbReference>
<dbReference type="InterPro" id="IPR035647">
    <property type="entry name" value="EFG_III/V"/>
</dbReference>
<dbReference type="InterPro" id="IPR000640">
    <property type="entry name" value="EFG_V-like"/>
</dbReference>
<dbReference type="InterPro" id="IPR004161">
    <property type="entry name" value="EFTu-like_2"/>
</dbReference>
<dbReference type="InterPro" id="IPR031157">
    <property type="entry name" value="G_TR_CS"/>
</dbReference>
<dbReference type="InterPro" id="IPR038363">
    <property type="entry name" value="LepA_C_sf"/>
</dbReference>
<dbReference type="InterPro" id="IPR013842">
    <property type="entry name" value="LepA_CTD"/>
</dbReference>
<dbReference type="InterPro" id="IPR035654">
    <property type="entry name" value="LepA_IV"/>
</dbReference>
<dbReference type="InterPro" id="IPR027417">
    <property type="entry name" value="P-loop_NTPase"/>
</dbReference>
<dbReference type="InterPro" id="IPR005225">
    <property type="entry name" value="Small_GTP-bd"/>
</dbReference>
<dbReference type="InterPro" id="IPR000795">
    <property type="entry name" value="T_Tr_GTP-bd_dom"/>
</dbReference>
<dbReference type="NCBIfam" id="TIGR01393">
    <property type="entry name" value="lepA"/>
    <property type="match status" value="1"/>
</dbReference>
<dbReference type="NCBIfam" id="TIGR00231">
    <property type="entry name" value="small_GTP"/>
    <property type="match status" value="1"/>
</dbReference>
<dbReference type="PANTHER" id="PTHR43512:SF4">
    <property type="entry name" value="TRANSLATION FACTOR GUF1 HOMOLOG, CHLOROPLASTIC"/>
    <property type="match status" value="1"/>
</dbReference>
<dbReference type="PANTHER" id="PTHR43512">
    <property type="entry name" value="TRANSLATION FACTOR GUF1-RELATED"/>
    <property type="match status" value="1"/>
</dbReference>
<dbReference type="Pfam" id="PF00679">
    <property type="entry name" value="EFG_C"/>
    <property type="match status" value="1"/>
</dbReference>
<dbReference type="Pfam" id="PF00009">
    <property type="entry name" value="GTP_EFTU"/>
    <property type="match status" value="1"/>
</dbReference>
<dbReference type="Pfam" id="PF03144">
    <property type="entry name" value="GTP_EFTU_D2"/>
    <property type="match status" value="1"/>
</dbReference>
<dbReference type="Pfam" id="PF06421">
    <property type="entry name" value="LepA_C"/>
    <property type="match status" value="1"/>
</dbReference>
<dbReference type="PRINTS" id="PR00315">
    <property type="entry name" value="ELONGATNFCT"/>
</dbReference>
<dbReference type="SUPFAM" id="SSF54980">
    <property type="entry name" value="EF-G C-terminal domain-like"/>
    <property type="match status" value="2"/>
</dbReference>
<dbReference type="SUPFAM" id="SSF52540">
    <property type="entry name" value="P-loop containing nucleoside triphosphate hydrolases"/>
    <property type="match status" value="1"/>
</dbReference>
<dbReference type="PROSITE" id="PS00301">
    <property type="entry name" value="G_TR_1"/>
    <property type="match status" value="1"/>
</dbReference>
<dbReference type="PROSITE" id="PS51722">
    <property type="entry name" value="G_TR_2"/>
    <property type="match status" value="1"/>
</dbReference>
<keyword id="KW-0997">Cell inner membrane</keyword>
<keyword id="KW-1003">Cell membrane</keyword>
<keyword id="KW-0342">GTP-binding</keyword>
<keyword id="KW-0378">Hydrolase</keyword>
<keyword id="KW-0472">Membrane</keyword>
<keyword id="KW-0547">Nucleotide-binding</keyword>
<keyword id="KW-0648">Protein biosynthesis</keyword>
<comment type="function">
    <text evidence="1">Required for accurate and efficient protein synthesis under certain stress conditions. May act as a fidelity factor of the translation reaction, by catalyzing a one-codon backward translocation of tRNAs on improperly translocated ribosomes. Back-translocation proceeds from a post-translocation (POST) complex to a pre-translocation (PRE) complex, thus giving elongation factor G a second chance to translocate the tRNAs correctly. Binds to ribosomes in a GTP-dependent manner.</text>
</comment>
<comment type="catalytic activity">
    <reaction evidence="1">
        <text>GTP + H2O = GDP + phosphate + H(+)</text>
        <dbReference type="Rhea" id="RHEA:19669"/>
        <dbReference type="ChEBI" id="CHEBI:15377"/>
        <dbReference type="ChEBI" id="CHEBI:15378"/>
        <dbReference type="ChEBI" id="CHEBI:37565"/>
        <dbReference type="ChEBI" id="CHEBI:43474"/>
        <dbReference type="ChEBI" id="CHEBI:58189"/>
        <dbReference type="EC" id="3.6.5.n1"/>
    </reaction>
</comment>
<comment type="subcellular location">
    <subcellularLocation>
        <location evidence="1">Cell inner membrane</location>
        <topology evidence="1">Peripheral membrane protein</topology>
        <orientation evidence="1">Cytoplasmic side</orientation>
    </subcellularLocation>
</comment>
<comment type="similarity">
    <text evidence="1">Belongs to the TRAFAC class translation factor GTPase superfamily. Classic translation factor GTPase family. LepA subfamily.</text>
</comment>
<name>LEPA_ECO5E</name>
<reference key="1">
    <citation type="journal article" date="2011" name="Proc. Natl. Acad. Sci. U.S.A.">
        <title>Genomic anatomy of Escherichia coli O157:H7 outbreaks.</title>
        <authorList>
            <person name="Eppinger M."/>
            <person name="Mammel M.K."/>
            <person name="Leclerc J.E."/>
            <person name="Ravel J."/>
            <person name="Cebula T.A."/>
        </authorList>
    </citation>
    <scope>NUCLEOTIDE SEQUENCE [LARGE SCALE GENOMIC DNA]</scope>
    <source>
        <strain>EC4115 / EHEC</strain>
    </source>
</reference>
<organism>
    <name type="scientific">Escherichia coli O157:H7 (strain EC4115 / EHEC)</name>
    <dbReference type="NCBI Taxonomy" id="444450"/>
    <lineage>
        <taxon>Bacteria</taxon>
        <taxon>Pseudomonadati</taxon>
        <taxon>Pseudomonadota</taxon>
        <taxon>Gammaproteobacteria</taxon>
        <taxon>Enterobacterales</taxon>
        <taxon>Enterobacteriaceae</taxon>
        <taxon>Escherichia</taxon>
    </lineage>
</organism>